<comment type="subcellular location">
    <subcellularLocation>
        <location evidence="2">Cell membrane</location>
        <topology evidence="3">Single-pass membrane protein</topology>
    </subcellularLocation>
</comment>
<comment type="similarity">
    <text evidence="3">Belongs to the YjiK family.</text>
</comment>
<comment type="sequence caution" evidence="3">
    <conflict type="erroneous initiation">
        <sequence resource="EMBL-CDS" id="ABB68799"/>
    </conflict>
</comment>
<sequence length="286" mass="31938">MTKSISLSKRISVIVILFAIVAVCTFFVQSCARKSNHAASFQNYHATIDGKEIAGITNNISSLTWSAQSNTLFSTINKPAAIVEMTTNGDFIRTIPLDFVKDLETIEYIGDNQFVISDERDYAIYVISLTPNSEVKILKKIKIPLQDSPTNCGFEGLAYSRQDHTFWFFKEKNPIEVYKVNGLLSSNELHISKDEALQRQFTLDDVSGAEFNQQKNTLLVLSHESRALQEVTLVGEVIGEISLTKGSRGLSHNIKQAEGIAMDASGNIYIVSEPNRFYRFTPKSSH</sequence>
<gene>
    <name type="primary">yjiK</name>
    <name type="ordered locus">SBO_4384</name>
</gene>
<feature type="chain" id="PRO_0000294107" description="Uncharacterized protein YjiK">
    <location>
        <begin position="1"/>
        <end position="286"/>
    </location>
</feature>
<feature type="transmembrane region" description="Helical" evidence="1">
    <location>
        <begin position="11"/>
        <end position="31"/>
    </location>
</feature>
<keyword id="KW-1003">Cell membrane</keyword>
<keyword id="KW-0472">Membrane</keyword>
<keyword id="KW-0812">Transmembrane</keyword>
<keyword id="KW-1133">Transmembrane helix</keyword>
<protein>
    <recommendedName>
        <fullName>Uncharacterized protein YjiK</fullName>
    </recommendedName>
</protein>
<evidence type="ECO:0000255" key="1"/>
<evidence type="ECO:0000255" key="2">
    <source>
        <dbReference type="PROSITE-ProRule" id="PRU00303"/>
    </source>
</evidence>
<evidence type="ECO:0000305" key="3"/>
<accession>Q31T09</accession>
<reference key="1">
    <citation type="journal article" date="2005" name="Nucleic Acids Res.">
        <title>Genome dynamics and diversity of Shigella species, the etiologic agents of bacillary dysentery.</title>
        <authorList>
            <person name="Yang F."/>
            <person name="Yang J."/>
            <person name="Zhang X."/>
            <person name="Chen L."/>
            <person name="Jiang Y."/>
            <person name="Yan Y."/>
            <person name="Tang X."/>
            <person name="Wang J."/>
            <person name="Xiong Z."/>
            <person name="Dong J."/>
            <person name="Xue Y."/>
            <person name="Zhu Y."/>
            <person name="Xu X."/>
            <person name="Sun L."/>
            <person name="Chen S."/>
            <person name="Nie H."/>
            <person name="Peng J."/>
            <person name="Xu J."/>
            <person name="Wang Y."/>
            <person name="Yuan Z."/>
            <person name="Wen Y."/>
            <person name="Yao Z."/>
            <person name="Shen Y."/>
            <person name="Qiang B."/>
            <person name="Hou Y."/>
            <person name="Yu J."/>
            <person name="Jin Q."/>
        </authorList>
    </citation>
    <scope>NUCLEOTIDE SEQUENCE [LARGE SCALE GENOMIC DNA]</scope>
    <source>
        <strain>Sb227</strain>
    </source>
</reference>
<organism>
    <name type="scientific">Shigella boydii serotype 4 (strain Sb227)</name>
    <dbReference type="NCBI Taxonomy" id="300268"/>
    <lineage>
        <taxon>Bacteria</taxon>
        <taxon>Pseudomonadati</taxon>
        <taxon>Pseudomonadota</taxon>
        <taxon>Gammaproteobacteria</taxon>
        <taxon>Enterobacterales</taxon>
        <taxon>Enterobacteriaceae</taxon>
        <taxon>Shigella</taxon>
    </lineage>
</organism>
<name>YJIK_SHIBS</name>
<proteinExistence type="inferred from homology"/>
<dbReference type="EMBL" id="CP000036">
    <property type="protein sequence ID" value="ABB68799.1"/>
    <property type="status" value="ALT_INIT"/>
    <property type="molecule type" value="Genomic_DNA"/>
</dbReference>
<dbReference type="SMR" id="Q31T09"/>
<dbReference type="KEGG" id="sbo:SBO_4384"/>
<dbReference type="HOGENOM" id="CLU_055438_1_1_6"/>
<dbReference type="Proteomes" id="UP000007067">
    <property type="component" value="Chromosome"/>
</dbReference>
<dbReference type="GO" id="GO:0005886">
    <property type="term" value="C:plasma membrane"/>
    <property type="evidence" value="ECO:0007669"/>
    <property type="project" value="UniProtKB-SubCell"/>
</dbReference>
<dbReference type="CDD" id="cd09971">
    <property type="entry name" value="SdiA-regulated"/>
    <property type="match status" value="1"/>
</dbReference>
<dbReference type="Gene3D" id="2.120.10.30">
    <property type="entry name" value="TolB, C-terminal domain"/>
    <property type="match status" value="1"/>
</dbReference>
<dbReference type="InterPro" id="IPR011042">
    <property type="entry name" value="6-blade_b-propeller_TolB-like"/>
</dbReference>
<dbReference type="InterPro" id="IPR009722">
    <property type="entry name" value="YjiK/CarP"/>
</dbReference>
<dbReference type="Pfam" id="PF06977">
    <property type="entry name" value="SdiA-regulated"/>
    <property type="match status" value="1"/>
</dbReference>
<dbReference type="SUPFAM" id="SSF50956">
    <property type="entry name" value="Thermostable phytase (3-phytase)"/>
    <property type="match status" value="1"/>
</dbReference>
<dbReference type="PROSITE" id="PS51257">
    <property type="entry name" value="PROKAR_LIPOPROTEIN"/>
    <property type="match status" value="1"/>
</dbReference>